<proteinExistence type="inferred from homology"/>
<comment type="function">
    <text evidence="1">Part of the high-affinity ATP-driven potassium transport (or Kdp) system, which catalyzes the hydrolysis of ATP coupled with the electrogenic transport of potassium into the cytoplasm. This subunit binds the periplasmic potassium ions and delivers the ions to the membrane domain of KdpB through an intramembrane tunnel.</text>
</comment>
<comment type="subunit">
    <text evidence="1">The system is composed of three essential subunits: KdpA, KdpB and KdpC.</text>
</comment>
<comment type="subcellular location">
    <subcellularLocation>
        <location evidence="1">Cell inner membrane</location>
        <topology evidence="1">Multi-pass membrane protein</topology>
    </subcellularLocation>
</comment>
<comment type="similarity">
    <text evidence="1">Belongs to the KdpA family.</text>
</comment>
<dbReference type="EMBL" id="CU468135">
    <property type="protein sequence ID" value="CAO98411.1"/>
    <property type="molecule type" value="Genomic_DNA"/>
</dbReference>
<dbReference type="RefSeq" id="WP_012443034.1">
    <property type="nucleotide sequence ID" value="NC_010694.1"/>
</dbReference>
<dbReference type="SMR" id="B2VJK4"/>
<dbReference type="STRING" id="465817.ETA_33650"/>
<dbReference type="KEGG" id="eta:ETA_33650"/>
<dbReference type="eggNOG" id="COG2060">
    <property type="taxonomic scope" value="Bacteria"/>
</dbReference>
<dbReference type="HOGENOM" id="CLU_018614_3_0_6"/>
<dbReference type="OrthoDB" id="9763796at2"/>
<dbReference type="Proteomes" id="UP000001726">
    <property type="component" value="Chromosome"/>
</dbReference>
<dbReference type="GO" id="GO:0005886">
    <property type="term" value="C:plasma membrane"/>
    <property type="evidence" value="ECO:0007669"/>
    <property type="project" value="UniProtKB-SubCell"/>
</dbReference>
<dbReference type="GO" id="GO:0008556">
    <property type="term" value="F:P-type potassium transmembrane transporter activity"/>
    <property type="evidence" value="ECO:0007669"/>
    <property type="project" value="InterPro"/>
</dbReference>
<dbReference type="GO" id="GO:0030955">
    <property type="term" value="F:potassium ion binding"/>
    <property type="evidence" value="ECO:0007669"/>
    <property type="project" value="UniProtKB-UniRule"/>
</dbReference>
<dbReference type="HAMAP" id="MF_00275">
    <property type="entry name" value="KdpA"/>
    <property type="match status" value="1"/>
</dbReference>
<dbReference type="InterPro" id="IPR004623">
    <property type="entry name" value="KdpA"/>
</dbReference>
<dbReference type="NCBIfam" id="TIGR00680">
    <property type="entry name" value="kdpA"/>
    <property type="match status" value="1"/>
</dbReference>
<dbReference type="PANTHER" id="PTHR30607">
    <property type="entry name" value="POTASSIUM-TRANSPORTING ATPASE A CHAIN"/>
    <property type="match status" value="1"/>
</dbReference>
<dbReference type="PANTHER" id="PTHR30607:SF2">
    <property type="entry name" value="POTASSIUM-TRANSPORTING ATPASE POTASSIUM-BINDING SUBUNIT"/>
    <property type="match status" value="1"/>
</dbReference>
<dbReference type="Pfam" id="PF03814">
    <property type="entry name" value="KdpA"/>
    <property type="match status" value="1"/>
</dbReference>
<dbReference type="PIRSF" id="PIRSF001294">
    <property type="entry name" value="K_ATPaseA"/>
    <property type="match status" value="1"/>
</dbReference>
<evidence type="ECO:0000255" key="1">
    <source>
        <dbReference type="HAMAP-Rule" id="MF_00275"/>
    </source>
</evidence>
<gene>
    <name evidence="1" type="primary">kdpA</name>
    <name type="ordered locus">ETA_33650</name>
</gene>
<reference key="1">
    <citation type="journal article" date="2008" name="Environ. Microbiol.">
        <title>The genome of Erwinia tasmaniensis strain Et1/99, a non-pathogenic bacterium in the genus Erwinia.</title>
        <authorList>
            <person name="Kube M."/>
            <person name="Migdoll A.M."/>
            <person name="Mueller I."/>
            <person name="Kuhl H."/>
            <person name="Beck A."/>
            <person name="Reinhardt R."/>
            <person name="Geider K."/>
        </authorList>
    </citation>
    <scope>NUCLEOTIDE SEQUENCE [LARGE SCALE GENOMIC DNA]</scope>
    <source>
        <strain>DSM 17950 / CFBP 7177 / CIP 109463 / NCPPB 4357 / Et1/99</strain>
    </source>
</reference>
<keyword id="KW-0997">Cell inner membrane</keyword>
<keyword id="KW-1003">Cell membrane</keyword>
<keyword id="KW-0406">Ion transport</keyword>
<keyword id="KW-0472">Membrane</keyword>
<keyword id="KW-0630">Potassium</keyword>
<keyword id="KW-0633">Potassium transport</keyword>
<keyword id="KW-1185">Reference proteome</keyword>
<keyword id="KW-0812">Transmembrane</keyword>
<keyword id="KW-1133">Transmembrane helix</keyword>
<keyword id="KW-0813">Transport</keyword>
<name>KDPA_ERWT9</name>
<sequence length="561" mass="59750">MMASASLLIGSYLLLLMLLARPLGKGLAHLVADRPLHGFATAERGLWRVSGVENQGMRWQRYLLAILLFNAAGLLLLLLILMNQASLPLNPQQMPNLSWDLALNTAVSFITNTDWQAYAGESTLSYFSQMAGLTVQNFLSAATGIAVAFALMRGFVNREQGELGNAWRDITRITLYVLLPLSLLMALFLVSQGTLQNLHGYLDLTTLEGAKQTLPMGPVASQEAIKMLGTNGGGFFNANSAHPFENPTALSNFVQMLAIFLIPAALCFAFGDVVRDRRQGHALLWSMSLMFVAAVVVVMWAEVKGNPHFLTLGADSAANMEGKETRFGILNSSLFAVITTAASCGAVNAMHDSFTALGGMVPMWLMQIGEVVFGGVGSGLYGMLLFVLLAVFIAGLMIGRSPEYLGKKIDVWEMKMTALAILVTPVLVLLGAALAMMTDAGRSAMLNPGTHGFSEVLYALSSAANNNGSAFAGLNANTPFWNMLLAFCMLVGRFGIIVPVLAIAGSLAMKKVQPAGNGTLPTHGTLFIALLIGTVMLVGALTFIPALALGPVAEHLHMSGH</sequence>
<accession>B2VJK4</accession>
<organism>
    <name type="scientific">Erwinia tasmaniensis (strain DSM 17950 / CFBP 7177 / CIP 109463 / NCPPB 4357 / Et1/99)</name>
    <dbReference type="NCBI Taxonomy" id="465817"/>
    <lineage>
        <taxon>Bacteria</taxon>
        <taxon>Pseudomonadati</taxon>
        <taxon>Pseudomonadota</taxon>
        <taxon>Gammaproteobacteria</taxon>
        <taxon>Enterobacterales</taxon>
        <taxon>Erwiniaceae</taxon>
        <taxon>Erwinia</taxon>
    </lineage>
</organism>
<feature type="chain" id="PRO_1000114681" description="Potassium-transporting ATPase potassium-binding subunit">
    <location>
        <begin position="1"/>
        <end position="561"/>
    </location>
</feature>
<feature type="transmembrane region" description="Helical" evidence="1">
    <location>
        <begin position="1"/>
        <end position="21"/>
    </location>
</feature>
<feature type="transmembrane region" description="Helical" evidence="1">
    <location>
        <begin position="62"/>
        <end position="82"/>
    </location>
</feature>
<feature type="transmembrane region" description="Helical" evidence="1">
    <location>
        <begin position="132"/>
        <end position="152"/>
    </location>
</feature>
<feature type="transmembrane region" description="Helical" evidence="1">
    <location>
        <begin position="173"/>
        <end position="193"/>
    </location>
</feature>
<feature type="transmembrane region" description="Helical" evidence="1">
    <location>
        <begin position="253"/>
        <end position="273"/>
    </location>
</feature>
<feature type="transmembrane region" description="Helical" evidence="1">
    <location>
        <begin position="283"/>
        <end position="303"/>
    </location>
</feature>
<feature type="transmembrane region" description="Helical" evidence="1">
    <location>
        <begin position="327"/>
        <end position="347"/>
    </location>
</feature>
<feature type="transmembrane region" description="Helical" evidence="1">
    <location>
        <begin position="356"/>
        <end position="376"/>
    </location>
</feature>
<feature type="transmembrane region" description="Helical" evidence="1">
    <location>
        <begin position="379"/>
        <end position="399"/>
    </location>
</feature>
<feature type="transmembrane region" description="Helical" evidence="1">
    <location>
        <begin position="416"/>
        <end position="436"/>
    </location>
</feature>
<feature type="transmembrane region" description="Helical" evidence="1">
    <location>
        <begin position="483"/>
        <end position="503"/>
    </location>
</feature>
<feature type="transmembrane region" description="Helical" evidence="1">
    <location>
        <begin position="526"/>
        <end position="546"/>
    </location>
</feature>
<protein>
    <recommendedName>
        <fullName evidence="1">Potassium-transporting ATPase potassium-binding subunit</fullName>
    </recommendedName>
    <alternativeName>
        <fullName evidence="1">ATP phosphohydrolase [potassium-transporting] A chain</fullName>
    </alternativeName>
    <alternativeName>
        <fullName evidence="1">Potassium-binding and translocating subunit A</fullName>
    </alternativeName>
    <alternativeName>
        <fullName evidence="1">Potassium-translocating ATPase A chain</fullName>
    </alternativeName>
</protein>